<keyword id="KW-0028">Amino-acid biosynthesis</keyword>
<keyword id="KW-0055">Arginine biosynthesis</keyword>
<keyword id="KW-0963">Cytoplasm</keyword>
<keyword id="KW-0521">NADP</keyword>
<keyword id="KW-0560">Oxidoreductase</keyword>
<keyword id="KW-1185">Reference proteome</keyword>
<gene>
    <name evidence="1" type="primary">argC</name>
    <name type="ordered locus">NE1482</name>
</gene>
<organism>
    <name type="scientific">Nitrosomonas europaea (strain ATCC 19718 / CIP 103999 / KCTC 2705 / NBRC 14298)</name>
    <dbReference type="NCBI Taxonomy" id="228410"/>
    <lineage>
        <taxon>Bacteria</taxon>
        <taxon>Pseudomonadati</taxon>
        <taxon>Pseudomonadota</taxon>
        <taxon>Betaproteobacteria</taxon>
        <taxon>Nitrosomonadales</taxon>
        <taxon>Nitrosomonadaceae</taxon>
        <taxon>Nitrosomonas</taxon>
    </lineage>
</organism>
<comment type="function">
    <text evidence="1">Catalyzes the NADPH-dependent reduction of N-acetyl-5-glutamyl phosphate to yield N-acetyl-L-glutamate 5-semialdehyde.</text>
</comment>
<comment type="catalytic activity">
    <reaction evidence="1">
        <text>N-acetyl-L-glutamate 5-semialdehyde + phosphate + NADP(+) = N-acetyl-L-glutamyl 5-phosphate + NADPH + H(+)</text>
        <dbReference type="Rhea" id="RHEA:21588"/>
        <dbReference type="ChEBI" id="CHEBI:15378"/>
        <dbReference type="ChEBI" id="CHEBI:29123"/>
        <dbReference type="ChEBI" id="CHEBI:43474"/>
        <dbReference type="ChEBI" id="CHEBI:57783"/>
        <dbReference type="ChEBI" id="CHEBI:57936"/>
        <dbReference type="ChEBI" id="CHEBI:58349"/>
        <dbReference type="EC" id="1.2.1.38"/>
    </reaction>
</comment>
<comment type="pathway">
    <text evidence="1">Amino-acid biosynthesis; L-arginine biosynthesis; N(2)-acetyl-L-ornithine from L-glutamate: step 3/4.</text>
</comment>
<comment type="subcellular location">
    <subcellularLocation>
        <location evidence="1">Cytoplasm</location>
    </subcellularLocation>
</comment>
<comment type="similarity">
    <text evidence="1">Belongs to the NAGSA dehydrogenase family. Type 1 subfamily.</text>
</comment>
<reference key="1">
    <citation type="journal article" date="2003" name="J. Bacteriol.">
        <title>Complete genome sequence of the ammonia-oxidizing bacterium and obligate chemolithoautotroph Nitrosomonas europaea.</title>
        <authorList>
            <person name="Chain P."/>
            <person name="Lamerdin J.E."/>
            <person name="Larimer F.W."/>
            <person name="Regala W."/>
            <person name="Lao V."/>
            <person name="Land M.L."/>
            <person name="Hauser L."/>
            <person name="Hooper A.B."/>
            <person name="Klotz M.G."/>
            <person name="Norton J."/>
            <person name="Sayavedra-Soto L.A."/>
            <person name="Arciero D.M."/>
            <person name="Hommes N.G."/>
            <person name="Whittaker M.M."/>
            <person name="Arp D.J."/>
        </authorList>
    </citation>
    <scope>NUCLEOTIDE SEQUENCE [LARGE SCALE GENOMIC DNA]</scope>
    <source>
        <strain>ATCC 19718 / CIP 103999 / KCTC 2705 / NBRC 14298</strain>
    </source>
</reference>
<proteinExistence type="inferred from homology"/>
<dbReference type="EC" id="1.2.1.38" evidence="1"/>
<dbReference type="EMBL" id="AL954747">
    <property type="protein sequence ID" value="CAD85393.1"/>
    <property type="molecule type" value="Genomic_DNA"/>
</dbReference>
<dbReference type="RefSeq" id="WP_011112050.1">
    <property type="nucleotide sequence ID" value="NC_004757.1"/>
</dbReference>
<dbReference type="SMR" id="Q82UK2"/>
<dbReference type="STRING" id="228410.NE1482"/>
<dbReference type="GeneID" id="87104656"/>
<dbReference type="KEGG" id="neu:NE1482"/>
<dbReference type="eggNOG" id="COG0002">
    <property type="taxonomic scope" value="Bacteria"/>
</dbReference>
<dbReference type="HOGENOM" id="CLU_006384_0_1_4"/>
<dbReference type="OrthoDB" id="9801289at2"/>
<dbReference type="PhylomeDB" id="Q82UK2"/>
<dbReference type="UniPathway" id="UPA00068">
    <property type="reaction ID" value="UER00108"/>
</dbReference>
<dbReference type="Proteomes" id="UP000001416">
    <property type="component" value="Chromosome"/>
</dbReference>
<dbReference type="GO" id="GO:0005737">
    <property type="term" value="C:cytoplasm"/>
    <property type="evidence" value="ECO:0007669"/>
    <property type="project" value="UniProtKB-SubCell"/>
</dbReference>
<dbReference type="GO" id="GO:0003942">
    <property type="term" value="F:N-acetyl-gamma-glutamyl-phosphate reductase activity"/>
    <property type="evidence" value="ECO:0007669"/>
    <property type="project" value="UniProtKB-UniRule"/>
</dbReference>
<dbReference type="GO" id="GO:0051287">
    <property type="term" value="F:NAD binding"/>
    <property type="evidence" value="ECO:0007669"/>
    <property type="project" value="InterPro"/>
</dbReference>
<dbReference type="GO" id="GO:0070401">
    <property type="term" value="F:NADP+ binding"/>
    <property type="evidence" value="ECO:0007669"/>
    <property type="project" value="InterPro"/>
</dbReference>
<dbReference type="GO" id="GO:0006526">
    <property type="term" value="P:L-arginine biosynthetic process"/>
    <property type="evidence" value="ECO:0007669"/>
    <property type="project" value="UniProtKB-UniRule"/>
</dbReference>
<dbReference type="CDD" id="cd23934">
    <property type="entry name" value="AGPR_1_C"/>
    <property type="match status" value="1"/>
</dbReference>
<dbReference type="CDD" id="cd17895">
    <property type="entry name" value="AGPR_1_N"/>
    <property type="match status" value="1"/>
</dbReference>
<dbReference type="FunFam" id="3.30.360.10:FF:000014">
    <property type="entry name" value="N-acetyl-gamma-glutamyl-phosphate reductase"/>
    <property type="match status" value="1"/>
</dbReference>
<dbReference type="Gene3D" id="3.30.360.10">
    <property type="entry name" value="Dihydrodipicolinate Reductase, domain 2"/>
    <property type="match status" value="1"/>
</dbReference>
<dbReference type="Gene3D" id="3.40.50.720">
    <property type="entry name" value="NAD(P)-binding Rossmann-like Domain"/>
    <property type="match status" value="1"/>
</dbReference>
<dbReference type="HAMAP" id="MF_00150">
    <property type="entry name" value="ArgC_type1"/>
    <property type="match status" value="1"/>
</dbReference>
<dbReference type="InterPro" id="IPR023013">
    <property type="entry name" value="AGPR_AS"/>
</dbReference>
<dbReference type="InterPro" id="IPR000706">
    <property type="entry name" value="AGPR_type-1"/>
</dbReference>
<dbReference type="InterPro" id="IPR036291">
    <property type="entry name" value="NAD(P)-bd_dom_sf"/>
</dbReference>
<dbReference type="InterPro" id="IPR050085">
    <property type="entry name" value="NAGSA_dehydrogenase"/>
</dbReference>
<dbReference type="InterPro" id="IPR000534">
    <property type="entry name" value="Semialdehyde_DH_NAD-bd"/>
</dbReference>
<dbReference type="NCBIfam" id="TIGR01850">
    <property type="entry name" value="argC"/>
    <property type="match status" value="1"/>
</dbReference>
<dbReference type="PANTHER" id="PTHR32338:SF10">
    <property type="entry name" value="N-ACETYL-GAMMA-GLUTAMYL-PHOSPHATE REDUCTASE, CHLOROPLASTIC-RELATED"/>
    <property type="match status" value="1"/>
</dbReference>
<dbReference type="PANTHER" id="PTHR32338">
    <property type="entry name" value="N-ACETYL-GAMMA-GLUTAMYL-PHOSPHATE REDUCTASE, CHLOROPLASTIC-RELATED-RELATED"/>
    <property type="match status" value="1"/>
</dbReference>
<dbReference type="Pfam" id="PF01118">
    <property type="entry name" value="Semialdhyde_dh"/>
    <property type="match status" value="1"/>
</dbReference>
<dbReference type="Pfam" id="PF22698">
    <property type="entry name" value="Semialdhyde_dhC_1"/>
    <property type="match status" value="1"/>
</dbReference>
<dbReference type="SMART" id="SM00859">
    <property type="entry name" value="Semialdhyde_dh"/>
    <property type="match status" value="1"/>
</dbReference>
<dbReference type="SUPFAM" id="SSF55347">
    <property type="entry name" value="Glyceraldehyde-3-phosphate dehydrogenase-like, C-terminal domain"/>
    <property type="match status" value="1"/>
</dbReference>
<dbReference type="SUPFAM" id="SSF51735">
    <property type="entry name" value="NAD(P)-binding Rossmann-fold domains"/>
    <property type="match status" value="1"/>
</dbReference>
<dbReference type="PROSITE" id="PS01224">
    <property type="entry name" value="ARGC"/>
    <property type="match status" value="1"/>
</dbReference>
<feature type="chain" id="PRO_0000112429" description="N-acetyl-gamma-glutamyl-phosphate reductase">
    <location>
        <begin position="1"/>
        <end position="342"/>
    </location>
</feature>
<feature type="active site" evidence="1">
    <location>
        <position position="149"/>
    </location>
</feature>
<sequence length="342" mass="37022">MINAGIVGGTGYTGVELLRILVQHPKVKLKVITSRQEAGTGVDELFSSLRGQIALKFSDPAKVDFSKCDVVFFATPNGIAMQQAKALLDSGIKVIDLAADFRIKDVAEWEKWYGMTHAAPELVAEAVYGLPEVNREKIRDARLIANPGCYPTAVQLGFIPLIEAGAVDADHLIADTKSGVSGAGRKAEIHTLYAEASDNFKSYAVPGHRHLPEIRQGLSERSNGPIGLTFVPHLTPMIRGIHATLYARLTRDVDLQTLYENRYANEPFVDVLPAGSHPETRSVRGSNFCRIAVHRPGNGDTAVILSVTDNLVKGAAGQAVQNMNIMYGLPETTGIRHVPLLP</sequence>
<accession>Q82UK2</accession>
<name>ARGC_NITEU</name>
<evidence type="ECO:0000255" key="1">
    <source>
        <dbReference type="HAMAP-Rule" id="MF_00150"/>
    </source>
</evidence>
<protein>
    <recommendedName>
        <fullName evidence="1">N-acetyl-gamma-glutamyl-phosphate reductase</fullName>
        <shortName evidence="1">AGPR</shortName>
        <ecNumber evidence="1">1.2.1.38</ecNumber>
    </recommendedName>
    <alternativeName>
        <fullName evidence="1">N-acetyl-glutamate semialdehyde dehydrogenase</fullName>
        <shortName evidence="1">NAGSA dehydrogenase</shortName>
    </alternativeName>
</protein>